<accession>Q1XDI9</accession>
<accession>A0MMB1</accession>
<proteinExistence type="inferred from homology"/>
<dbReference type="EMBL" id="DQ995204">
    <property type="protein sequence ID" value="ABJ91319.1"/>
    <property type="molecule type" value="Genomic_DNA"/>
</dbReference>
<dbReference type="EMBL" id="AP006715">
    <property type="protein sequence ID" value="BAE92422.1"/>
    <property type="molecule type" value="Genomic_DNA"/>
</dbReference>
<dbReference type="RefSeq" id="YP_536979.1">
    <property type="nucleotide sequence ID" value="NC_007932.1"/>
</dbReference>
<dbReference type="SMR" id="Q1XDI9"/>
<dbReference type="GeneID" id="3978860"/>
<dbReference type="GO" id="GO:0009507">
    <property type="term" value="C:chloroplast"/>
    <property type="evidence" value="ECO:0007669"/>
    <property type="project" value="UniProtKB-SubCell"/>
</dbReference>
<dbReference type="GO" id="GO:1990904">
    <property type="term" value="C:ribonucleoprotein complex"/>
    <property type="evidence" value="ECO:0007669"/>
    <property type="project" value="UniProtKB-KW"/>
</dbReference>
<dbReference type="GO" id="GO:0005840">
    <property type="term" value="C:ribosome"/>
    <property type="evidence" value="ECO:0007669"/>
    <property type="project" value="UniProtKB-KW"/>
</dbReference>
<dbReference type="GO" id="GO:0008097">
    <property type="term" value="F:5S rRNA binding"/>
    <property type="evidence" value="ECO:0007669"/>
    <property type="project" value="TreeGrafter"/>
</dbReference>
<dbReference type="GO" id="GO:0003735">
    <property type="term" value="F:structural constituent of ribosome"/>
    <property type="evidence" value="ECO:0007669"/>
    <property type="project" value="InterPro"/>
</dbReference>
<dbReference type="GO" id="GO:0006412">
    <property type="term" value="P:translation"/>
    <property type="evidence" value="ECO:0007669"/>
    <property type="project" value="UniProtKB-UniRule"/>
</dbReference>
<dbReference type="CDD" id="cd00432">
    <property type="entry name" value="Ribosomal_L18_L5e"/>
    <property type="match status" value="1"/>
</dbReference>
<dbReference type="FunFam" id="3.30.420.100:FF:000001">
    <property type="entry name" value="50S ribosomal protein L18"/>
    <property type="match status" value="1"/>
</dbReference>
<dbReference type="Gene3D" id="3.30.420.100">
    <property type="match status" value="1"/>
</dbReference>
<dbReference type="HAMAP" id="MF_01337_B">
    <property type="entry name" value="Ribosomal_uL18_B"/>
    <property type="match status" value="1"/>
</dbReference>
<dbReference type="InterPro" id="IPR004389">
    <property type="entry name" value="Ribosomal_uL18_bac-type"/>
</dbReference>
<dbReference type="InterPro" id="IPR005484">
    <property type="entry name" value="Ribosomal_uL18_bac/euk"/>
</dbReference>
<dbReference type="NCBIfam" id="TIGR00060">
    <property type="entry name" value="L18_bact"/>
    <property type="match status" value="1"/>
</dbReference>
<dbReference type="PANTHER" id="PTHR12899">
    <property type="entry name" value="39S RIBOSOMAL PROTEIN L18, MITOCHONDRIAL"/>
    <property type="match status" value="1"/>
</dbReference>
<dbReference type="PANTHER" id="PTHR12899:SF3">
    <property type="entry name" value="LARGE RIBOSOMAL SUBUNIT PROTEIN UL18M"/>
    <property type="match status" value="1"/>
</dbReference>
<dbReference type="Pfam" id="PF00861">
    <property type="entry name" value="Ribosomal_L18p"/>
    <property type="match status" value="1"/>
</dbReference>
<dbReference type="SUPFAM" id="SSF53137">
    <property type="entry name" value="Translational machinery components"/>
    <property type="match status" value="1"/>
</dbReference>
<protein>
    <recommendedName>
        <fullName evidence="2">Large ribosomal subunit protein uL18c</fullName>
    </recommendedName>
    <alternativeName>
        <fullName>50S ribosomal protein L18, chloroplastic</fullName>
    </alternativeName>
</protein>
<evidence type="ECO:0000250" key="1"/>
<evidence type="ECO:0000305" key="2"/>
<organism>
    <name type="scientific">Pyropia yezoensis</name>
    <name type="common">Susabi-nori</name>
    <name type="synonym">Porphyra yezoensis</name>
    <dbReference type="NCBI Taxonomy" id="2788"/>
    <lineage>
        <taxon>Eukaryota</taxon>
        <taxon>Rhodophyta</taxon>
        <taxon>Bangiophyceae</taxon>
        <taxon>Bangiales</taxon>
        <taxon>Bangiaceae</taxon>
        <taxon>Pyropia</taxon>
    </lineage>
</organism>
<reference key="1">
    <citation type="submission" date="2006-09" db="EMBL/GenBank/DDBJ databases">
        <title>Cloning and analysis of the Porphyra yezoensis gene for rpl18.</title>
        <authorList>
            <person name="Wang M.Q."/>
            <person name="Mao Y.X."/>
        </authorList>
    </citation>
    <scope>NUCLEOTIDE SEQUENCE [GENOMIC DNA]</scope>
    <source>
        <strain>Qingdao</strain>
    </source>
</reference>
<reference key="2">
    <citation type="submission" date="2003-11" db="EMBL/GenBank/DDBJ databases">
        <title>Whole genome sequence of Porphyra yezoensis chloroplast.</title>
        <authorList>
            <person name="Kunimoto M."/>
            <person name="Morishima K."/>
            <person name="Yoshikawa M."/>
            <person name="Fukuda S."/>
            <person name="Kobayashi T."/>
            <person name="Kobayashi M."/>
            <person name="Okazaki T."/>
            <person name="Ohara I."/>
            <person name="Nakayama I."/>
        </authorList>
    </citation>
    <scope>NUCLEOTIDE SEQUENCE [LARGE SCALE GENOMIC DNA]</scope>
    <source>
        <strain>U-51</strain>
    </source>
</reference>
<feature type="chain" id="PRO_0000251415" description="Large ribosomal subunit protein uL18c">
    <location>
        <begin position="1"/>
        <end position="120"/>
    </location>
</feature>
<keyword id="KW-0150">Chloroplast</keyword>
<keyword id="KW-0934">Plastid</keyword>
<keyword id="KW-0687">Ribonucleoprotein</keyword>
<keyword id="KW-0689">Ribosomal protein</keyword>
<keyword id="KW-0694">RNA-binding</keyword>
<keyword id="KW-0699">rRNA-binding</keyword>
<name>RK18_PYRYE</name>
<geneLocation type="chloroplast"/>
<comment type="function">
    <text evidence="1">Binds 5S rRNA, forms part of the central protuberance of the 50S subunit.</text>
</comment>
<comment type="subunit">
    <text evidence="1">Part of the 50S ribosomal subunit; contacts the 5S rRNA.</text>
</comment>
<comment type="subcellular location">
    <subcellularLocation>
        <location>Plastid</location>
        <location>Chloroplast</location>
    </subcellularLocation>
</comment>
<comment type="similarity">
    <text evidence="2">Belongs to the universal ribosomal protein uL18 family.</text>
</comment>
<sequence>MKLNTKQTRIHKHKRVRKKVQGTSSRPRLCVFRSNKHIYAQIIDDTQGITLVATSSVNLNNKESDNIRPNCDTSRVVGKQLAEQSMKEGIKNVVFDRGGKLYHGRVKALAEAAKEAGMGF</sequence>
<gene>
    <name type="primary">rpl18</name>
</gene>